<name>RSMJ_SHESH</name>
<feature type="chain" id="PRO_1000185126" description="Ribosomal RNA small subunit methyltransferase J">
    <location>
        <begin position="1"/>
        <end position="258"/>
    </location>
</feature>
<feature type="binding site" evidence="1">
    <location>
        <begin position="107"/>
        <end position="108"/>
    </location>
    <ligand>
        <name>S-adenosyl-L-methionine</name>
        <dbReference type="ChEBI" id="CHEBI:59789"/>
    </ligand>
</feature>
<feature type="binding site" evidence="1">
    <location>
        <begin position="123"/>
        <end position="124"/>
    </location>
    <ligand>
        <name>S-adenosyl-L-methionine</name>
        <dbReference type="ChEBI" id="CHEBI:59789"/>
    </ligand>
</feature>
<feature type="binding site" evidence="1">
    <location>
        <begin position="159"/>
        <end position="160"/>
    </location>
    <ligand>
        <name>S-adenosyl-L-methionine</name>
        <dbReference type="ChEBI" id="CHEBI:59789"/>
    </ligand>
</feature>
<feature type="binding site" evidence="1">
    <location>
        <position position="177"/>
    </location>
    <ligand>
        <name>S-adenosyl-L-methionine</name>
        <dbReference type="ChEBI" id="CHEBI:59789"/>
    </ligand>
</feature>
<gene>
    <name evidence="1" type="primary">rsmJ</name>
    <name type="ordered locus">Ssed_0164</name>
</gene>
<evidence type="ECO:0000255" key="1">
    <source>
        <dbReference type="HAMAP-Rule" id="MF_01523"/>
    </source>
</evidence>
<keyword id="KW-0963">Cytoplasm</keyword>
<keyword id="KW-0489">Methyltransferase</keyword>
<keyword id="KW-1185">Reference proteome</keyword>
<keyword id="KW-0698">rRNA processing</keyword>
<keyword id="KW-0949">S-adenosyl-L-methionine</keyword>
<keyword id="KW-0808">Transferase</keyword>
<proteinExistence type="inferred from homology"/>
<protein>
    <recommendedName>
        <fullName evidence="1">Ribosomal RNA small subunit methyltransferase J</fullName>
        <ecNumber evidence="1">2.1.1.242</ecNumber>
    </recommendedName>
    <alternativeName>
        <fullName evidence="1">16S rRNA m2G1516 methyltransferase</fullName>
    </alternativeName>
    <alternativeName>
        <fullName evidence="1">rRNA (guanine-N(2)-)-methyltransferase</fullName>
    </alternativeName>
</protein>
<organism>
    <name type="scientific">Shewanella sediminis (strain HAW-EB3)</name>
    <dbReference type="NCBI Taxonomy" id="425104"/>
    <lineage>
        <taxon>Bacteria</taxon>
        <taxon>Pseudomonadati</taxon>
        <taxon>Pseudomonadota</taxon>
        <taxon>Gammaproteobacteria</taxon>
        <taxon>Alteromonadales</taxon>
        <taxon>Shewanellaceae</taxon>
        <taxon>Shewanella</taxon>
    </lineage>
</organism>
<dbReference type="EC" id="2.1.1.242" evidence="1"/>
<dbReference type="EMBL" id="CP000821">
    <property type="protein sequence ID" value="ABV34777.1"/>
    <property type="molecule type" value="Genomic_DNA"/>
</dbReference>
<dbReference type="RefSeq" id="WP_012004303.1">
    <property type="nucleotide sequence ID" value="NC_009831.1"/>
</dbReference>
<dbReference type="SMR" id="A8FPK4"/>
<dbReference type="STRING" id="425104.Ssed_0164"/>
<dbReference type="KEGG" id="sse:Ssed_0164"/>
<dbReference type="eggNOG" id="COG0742">
    <property type="taxonomic scope" value="Bacteria"/>
</dbReference>
<dbReference type="HOGENOM" id="CLU_076324_0_0_6"/>
<dbReference type="OrthoDB" id="3191794at2"/>
<dbReference type="Proteomes" id="UP000002015">
    <property type="component" value="Chromosome"/>
</dbReference>
<dbReference type="GO" id="GO:0005737">
    <property type="term" value="C:cytoplasm"/>
    <property type="evidence" value="ECO:0007669"/>
    <property type="project" value="UniProtKB-SubCell"/>
</dbReference>
<dbReference type="GO" id="GO:0008990">
    <property type="term" value="F:rRNA (guanine-N2-)-methyltransferase activity"/>
    <property type="evidence" value="ECO:0007669"/>
    <property type="project" value="UniProtKB-UniRule"/>
</dbReference>
<dbReference type="CDD" id="cd02440">
    <property type="entry name" value="AdoMet_MTases"/>
    <property type="match status" value="1"/>
</dbReference>
<dbReference type="Gene3D" id="3.40.50.150">
    <property type="entry name" value="Vaccinia Virus protein VP39"/>
    <property type="match status" value="1"/>
</dbReference>
<dbReference type="Gene3D" id="3.40.1630.10">
    <property type="entry name" value="YhiQ-like domain"/>
    <property type="match status" value="1"/>
</dbReference>
<dbReference type="HAMAP" id="MF_01523">
    <property type="entry name" value="16SrRNA_methyltr_J"/>
    <property type="match status" value="1"/>
</dbReference>
<dbReference type="InterPro" id="IPR007536">
    <property type="entry name" value="16SrRNA_methylTrfase_J"/>
</dbReference>
<dbReference type="InterPro" id="IPR029063">
    <property type="entry name" value="SAM-dependent_MTases_sf"/>
</dbReference>
<dbReference type="PANTHER" id="PTHR36112">
    <property type="entry name" value="RIBOSOMAL RNA SMALL SUBUNIT METHYLTRANSFERASE J"/>
    <property type="match status" value="1"/>
</dbReference>
<dbReference type="PANTHER" id="PTHR36112:SF1">
    <property type="entry name" value="RIBOSOMAL RNA SMALL SUBUNIT METHYLTRANSFERASE J"/>
    <property type="match status" value="1"/>
</dbReference>
<dbReference type="Pfam" id="PF04445">
    <property type="entry name" value="SAM_MT"/>
    <property type="match status" value="1"/>
</dbReference>
<dbReference type="SUPFAM" id="SSF53335">
    <property type="entry name" value="S-adenosyl-L-methionine-dependent methyltransferases"/>
    <property type="match status" value="1"/>
</dbReference>
<reference key="1">
    <citation type="submission" date="2007-08" db="EMBL/GenBank/DDBJ databases">
        <title>Complete sequence of Shewanella sediminis HAW-EB3.</title>
        <authorList>
            <consortium name="US DOE Joint Genome Institute"/>
            <person name="Copeland A."/>
            <person name="Lucas S."/>
            <person name="Lapidus A."/>
            <person name="Barry K."/>
            <person name="Glavina del Rio T."/>
            <person name="Dalin E."/>
            <person name="Tice H."/>
            <person name="Pitluck S."/>
            <person name="Chertkov O."/>
            <person name="Brettin T."/>
            <person name="Bruce D."/>
            <person name="Detter J.C."/>
            <person name="Han C."/>
            <person name="Schmutz J."/>
            <person name="Larimer F."/>
            <person name="Land M."/>
            <person name="Hauser L."/>
            <person name="Kyrpides N."/>
            <person name="Kim E."/>
            <person name="Zhao J.-S."/>
            <person name="Richardson P."/>
        </authorList>
    </citation>
    <scope>NUCLEOTIDE SEQUENCE [LARGE SCALE GENOMIC DNA]</scope>
    <source>
        <strain>HAW-EB3</strain>
    </source>
</reference>
<comment type="function">
    <text evidence="1">Specifically methylates the guanosine in position 1516 of 16S rRNA.</text>
</comment>
<comment type="catalytic activity">
    <reaction evidence="1">
        <text>guanosine(1516) in 16S rRNA + S-adenosyl-L-methionine = N(2)-methylguanosine(1516) in 16S rRNA + S-adenosyl-L-homocysteine + H(+)</text>
        <dbReference type="Rhea" id="RHEA:43220"/>
        <dbReference type="Rhea" id="RHEA-COMP:10412"/>
        <dbReference type="Rhea" id="RHEA-COMP:10413"/>
        <dbReference type="ChEBI" id="CHEBI:15378"/>
        <dbReference type="ChEBI" id="CHEBI:57856"/>
        <dbReference type="ChEBI" id="CHEBI:59789"/>
        <dbReference type="ChEBI" id="CHEBI:74269"/>
        <dbReference type="ChEBI" id="CHEBI:74481"/>
        <dbReference type="EC" id="2.1.1.242"/>
    </reaction>
</comment>
<comment type="subcellular location">
    <subcellularLocation>
        <location evidence="1">Cytoplasm</location>
    </subcellularLocation>
</comment>
<comment type="similarity">
    <text evidence="1">Belongs to the methyltransferase superfamily. RsmJ family.</text>
</comment>
<accession>A8FPK4</accession>
<sequence>MTELKQSIQPIGIFFNAQYPSLEAICQRWGLVFDKEAAFELVFENNCLVLNKRDEPKLKGISVDFVSGAVAHRRKFGGGRGQSIAKAVGLKQGVNPSVVDGTAGLGRDAFVLASLGCNVTMVERNPVVAALLEDGLRRAYESEEIGDWMRERMRLVHGSSLESVAELGEEIDVVYLDPMYPHREKSALVKKEMRVFQSLVGADLDADGLLAPATALATKRVVVKRPDYAEDLDGVKPSMVISTKKNRFDVYVKAAMKA</sequence>